<evidence type="ECO:0000256" key="1">
    <source>
        <dbReference type="SAM" id="MobiDB-lite"/>
    </source>
</evidence>
<evidence type="ECO:0000305" key="2"/>
<evidence type="ECO:0007744" key="3">
    <source>
    </source>
</evidence>
<feature type="chain" id="PRO_0000372018" description="Uncharacterized protein At1g21580">
    <location>
        <begin position="1"/>
        <end position="1696"/>
    </location>
</feature>
<feature type="region of interest" description="Disordered" evidence="1">
    <location>
        <begin position="1"/>
        <end position="113"/>
    </location>
</feature>
<feature type="region of interest" description="Disordered" evidence="1">
    <location>
        <begin position="151"/>
        <end position="194"/>
    </location>
</feature>
<feature type="region of interest" description="Disordered" evidence="1">
    <location>
        <begin position="258"/>
        <end position="284"/>
    </location>
</feature>
<feature type="region of interest" description="Disordered" evidence="1">
    <location>
        <begin position="299"/>
        <end position="376"/>
    </location>
</feature>
<feature type="region of interest" description="Disordered" evidence="1">
    <location>
        <begin position="419"/>
        <end position="483"/>
    </location>
</feature>
<feature type="region of interest" description="Disordered" evidence="1">
    <location>
        <begin position="688"/>
        <end position="724"/>
    </location>
</feature>
<feature type="region of interest" description="Disordered" evidence="1">
    <location>
        <begin position="1063"/>
        <end position="1090"/>
    </location>
</feature>
<feature type="region of interest" description="Disordered" evidence="1">
    <location>
        <begin position="1184"/>
        <end position="1211"/>
    </location>
</feature>
<feature type="region of interest" description="Disordered" evidence="1">
    <location>
        <begin position="1319"/>
        <end position="1340"/>
    </location>
</feature>
<feature type="region of interest" description="Disordered" evidence="1">
    <location>
        <begin position="1361"/>
        <end position="1429"/>
    </location>
</feature>
<feature type="region of interest" description="Disordered" evidence="1">
    <location>
        <begin position="1658"/>
        <end position="1696"/>
    </location>
</feature>
<feature type="compositionally biased region" description="Pro residues" evidence="1">
    <location>
        <begin position="21"/>
        <end position="42"/>
    </location>
</feature>
<feature type="compositionally biased region" description="Polar residues" evidence="1">
    <location>
        <begin position="52"/>
        <end position="61"/>
    </location>
</feature>
<feature type="compositionally biased region" description="Low complexity" evidence="1">
    <location>
        <begin position="96"/>
        <end position="113"/>
    </location>
</feature>
<feature type="compositionally biased region" description="Polar residues" evidence="1">
    <location>
        <begin position="170"/>
        <end position="183"/>
    </location>
</feature>
<feature type="compositionally biased region" description="Basic and acidic residues" evidence="1">
    <location>
        <begin position="267"/>
        <end position="284"/>
    </location>
</feature>
<feature type="compositionally biased region" description="Basic and acidic residues" evidence="1">
    <location>
        <begin position="325"/>
        <end position="340"/>
    </location>
</feature>
<feature type="compositionally biased region" description="Basic and acidic residues" evidence="1">
    <location>
        <begin position="358"/>
        <end position="376"/>
    </location>
</feature>
<feature type="compositionally biased region" description="Basic and acidic residues" evidence="1">
    <location>
        <begin position="421"/>
        <end position="436"/>
    </location>
</feature>
<feature type="compositionally biased region" description="Basic and acidic residues" evidence="1">
    <location>
        <begin position="695"/>
        <end position="704"/>
    </location>
</feature>
<feature type="compositionally biased region" description="Basic and acidic residues" evidence="1">
    <location>
        <begin position="1184"/>
        <end position="1204"/>
    </location>
</feature>
<feature type="compositionally biased region" description="Basic and acidic residues" evidence="1">
    <location>
        <begin position="1361"/>
        <end position="1370"/>
    </location>
</feature>
<feature type="compositionally biased region" description="Polar residues" evidence="1">
    <location>
        <begin position="1389"/>
        <end position="1398"/>
    </location>
</feature>
<feature type="compositionally biased region" description="Polar residues" evidence="1">
    <location>
        <begin position="1658"/>
        <end position="1667"/>
    </location>
</feature>
<feature type="compositionally biased region" description="Polar residues" evidence="1">
    <location>
        <begin position="1677"/>
        <end position="1696"/>
    </location>
</feature>
<feature type="modified residue" description="Phosphoserine" evidence="3">
    <location>
        <position position="378"/>
    </location>
</feature>
<feature type="modified residue" description="Phosphoserine" evidence="3">
    <location>
        <position position="708"/>
    </location>
</feature>
<feature type="sequence conflict" description="In Ref. 3; BAF00586." evidence="2" ref="3">
    <original>G</original>
    <variation>S</variation>
    <location>
        <position position="158"/>
    </location>
</feature>
<keyword id="KW-0597">Phosphoprotein</keyword>
<keyword id="KW-1185">Reference proteome</keyword>
<sequence>MDSSHYNPTYDPWNSPYSPHLHPPSAPLPPPPPLPPPPPPRQSHPESPNLYGRSTQSNGQRQDYLHQYSHHRQDLPPNTVVNQPTSNYYQHPPPLQQQHQPLSLQQQQQHPQYIPQQVSYEPQRISQPLTSSIQCTESQSDWVGFNEKRLDSWTVDSGPGRSRVDDGPSRNYQYDYSRNSSGVNRGLDGSSRSRDEFRSLGYARKESGVTRTEGNYQARGQLKSESDRYVRGLGDGNRVLSSSVGYGSDRYGLTVSRDVTRSSASREGARETRNEGRTLYPEKKDDYYHSEIEQYFDRGRREASNELNRTPRKQVQKKSALLRLETPRSYKNSRENEWSRQHNHHNGNGKRFNSNSYRGKEHLGHSDRGLVEKQRGRSPVDLDISFKSNVLVAKPVASPTSAGIRSGASVTPRSIKARRALLSDKNEKVSVTERNGKLGTHLSDEISVSEGFRRSTRQTTASKNEKEPDSHSTPSSSDSGGKLNKVRFVNGVVQDSKVKLTDSGPEASTHDTEKISSFCETLIEAKDDINVKHGINTEACSTEEGVIDGNQSTLKSHEDVLDRTSTDCNAGEALLPKVMEMDEILKTKTTINTSPGKLPVSWPTVADLSGCSEDMDCDEDMDCDEDMDCIPSRNIPMMEVNTGFEERKSINSSDGSLGYGGKDFQKPYLDASIYFNREDPGDKVLAKSDIGGIEDDNKRIDKNVDSLSPENDSSRGRPMGLDSPASLDIANVSLDLANSNNSASGDLANANSFTVGTYMNPMVTSPDKSVVFQMESKNLPHCKNTVNAPVENVSGKGYMETTPLNVAAETADNMDSEEGKQTCVNDTSSSLTKVGVKGSSNVLSVERTGGCSHSDESDLAMAVPSEGCMENVSTERLVPDEELILKSYHPAEIPCVDSGSDSRGLKTCLLEPNVSLSKDLTDCARESLVEQDVSQRSAIFCDKLPSLSAFVTETTLAIGINGMSGNETVTDTESGLHEIQPCTTVCKLSPEDRFGYGSSGAIGSVRSLSIDKNLEKDSSKVSSCLVSDNSVSPCHISPLVAVNEEIQNKISVKANYSNSQDGIKHKEDNCTESVEVETHEEKAKLPGGTSKYRTPVTNITAGSGGDSLFLCDSLSSSRRRIRSEVHVSAVVDETSKGEEKSKPSGGIVAVRRDSVFPCDSLSSSPRLSRPLRSEIHVASMVDETSKSIEKIESSGGTSEHRTPETDIVAGSRDSVFPCNSLSNSQRLSFRQLRSEIHVANMVDETNRVKESQNGDSLLDTLQEQIMTSHELTQPGSSAHCDLVMKPMGDPIAKLTDITSDVGSQEKDLRNIAKTDTFDGEAVSSDGQVSGTEIPGGSGVRVSRSYSHADVKFALTHVKEHVVSVPHRDPQSKTSMNSKYEIEKRKKKPNYSTQKSYPSSLPYVSDTKKDANPPIHITKRHTWHRKSDASPSSFVAAKPLSSTLSTQQKFPKVTAQSNNSYVRKGNSLLRKPSHGSPGAALGIPPSAIQLNHFTVEDKSTGSSNMVDVDNASSLVKTGEIATLERQSKPPSDSSTSKLSNAIATSSGKCALSYSTDHLTTGLPESIMDSATSGEANFPHSGGDTLKTSDTLIQTGYASDCQQKRNPSDLDSSNLKRMVYVKRKANQLVAASDIHDVSQNQIPSSDGYFKRSKNQLVRNSESRCNQSISLPDDALDTRSAANMVSERPSSSAFSDSGM</sequence>
<dbReference type="EMBL" id="AC015447">
    <property type="protein sequence ID" value="AAF87903.1"/>
    <property type="status" value="ALT_SEQ"/>
    <property type="molecule type" value="Genomic_DNA"/>
</dbReference>
<dbReference type="EMBL" id="CP002684">
    <property type="protein sequence ID" value="AEE30120.1"/>
    <property type="status" value="ALT_SEQ"/>
    <property type="molecule type" value="Genomic_DNA"/>
</dbReference>
<dbReference type="EMBL" id="CP002684">
    <property type="protein sequence ID" value="ANM60306.1"/>
    <property type="molecule type" value="Genomic_DNA"/>
</dbReference>
<dbReference type="EMBL" id="AK228680">
    <property type="protein sequence ID" value="BAF00586.1"/>
    <property type="molecule type" value="mRNA"/>
</dbReference>
<dbReference type="PIR" id="F86348">
    <property type="entry name" value="F86348"/>
</dbReference>
<dbReference type="RefSeq" id="NP_001322603.1">
    <property type="nucleotide sequence ID" value="NM_001332519.1"/>
</dbReference>
<dbReference type="RefSeq" id="NP_173577.2">
    <property type="nucleotide sequence ID" value="NM_102007.4"/>
</dbReference>
<dbReference type="FunCoup" id="P0C945">
    <property type="interactions" value="637"/>
</dbReference>
<dbReference type="STRING" id="3702.P0C945"/>
<dbReference type="GlyGen" id="P0C945">
    <property type="glycosylation" value="1 site"/>
</dbReference>
<dbReference type="iPTMnet" id="P0C945"/>
<dbReference type="PaxDb" id="3702-AT1G21580.1"/>
<dbReference type="ProteomicsDB" id="242462"/>
<dbReference type="EnsemblPlants" id="AT1G21580.9">
    <property type="protein sequence ID" value="AT1G21580.9"/>
    <property type="gene ID" value="AT1G21580"/>
</dbReference>
<dbReference type="GeneID" id="838759"/>
<dbReference type="Gramene" id="AT1G21580.9">
    <property type="protein sequence ID" value="AT1G21580.9"/>
    <property type="gene ID" value="AT1G21580"/>
</dbReference>
<dbReference type="KEGG" id="ath:AT1G21580"/>
<dbReference type="Araport" id="AT1G21580"/>
<dbReference type="TAIR" id="AT1G21580">
    <property type="gene designation" value="SOP1"/>
</dbReference>
<dbReference type="eggNOG" id="KOG1492">
    <property type="taxonomic scope" value="Eukaryota"/>
</dbReference>
<dbReference type="HOGENOM" id="CLU_001506_0_0_1"/>
<dbReference type="InParanoid" id="P0C945"/>
<dbReference type="PhylomeDB" id="P0C945"/>
<dbReference type="PRO" id="PR:P0C945"/>
<dbReference type="Proteomes" id="UP000006548">
    <property type="component" value="Chromosome 1"/>
</dbReference>
<dbReference type="ExpressionAtlas" id="P0C945">
    <property type="expression patterns" value="baseline and differential"/>
</dbReference>
<dbReference type="PANTHER" id="PTHR46156">
    <property type="entry name" value="CCCH ZINGC FINGER"/>
    <property type="match status" value="1"/>
</dbReference>
<dbReference type="PANTHER" id="PTHR46156:SF1">
    <property type="entry name" value="ZINC FINGER CCCH DOMAIN-CONTAINING PROTEIN 3"/>
    <property type="match status" value="1"/>
</dbReference>
<reference key="1">
    <citation type="journal article" date="2000" name="Nature">
        <title>Sequence and analysis of chromosome 1 of the plant Arabidopsis thaliana.</title>
        <authorList>
            <person name="Theologis A."/>
            <person name="Ecker J.R."/>
            <person name="Palm C.J."/>
            <person name="Federspiel N.A."/>
            <person name="Kaul S."/>
            <person name="White O."/>
            <person name="Alonso J."/>
            <person name="Altafi H."/>
            <person name="Araujo R."/>
            <person name="Bowman C.L."/>
            <person name="Brooks S.Y."/>
            <person name="Buehler E."/>
            <person name="Chan A."/>
            <person name="Chao Q."/>
            <person name="Chen H."/>
            <person name="Cheuk R.F."/>
            <person name="Chin C.W."/>
            <person name="Chung M.K."/>
            <person name="Conn L."/>
            <person name="Conway A.B."/>
            <person name="Conway A.R."/>
            <person name="Creasy T.H."/>
            <person name="Dewar K."/>
            <person name="Dunn P."/>
            <person name="Etgu P."/>
            <person name="Feldblyum T.V."/>
            <person name="Feng J.-D."/>
            <person name="Fong B."/>
            <person name="Fujii C.Y."/>
            <person name="Gill J.E."/>
            <person name="Goldsmith A.D."/>
            <person name="Haas B."/>
            <person name="Hansen N.F."/>
            <person name="Hughes B."/>
            <person name="Huizar L."/>
            <person name="Hunter J.L."/>
            <person name="Jenkins J."/>
            <person name="Johnson-Hopson C."/>
            <person name="Khan S."/>
            <person name="Khaykin E."/>
            <person name="Kim C.J."/>
            <person name="Koo H.L."/>
            <person name="Kremenetskaia I."/>
            <person name="Kurtz D.B."/>
            <person name="Kwan A."/>
            <person name="Lam B."/>
            <person name="Langin-Hooper S."/>
            <person name="Lee A."/>
            <person name="Lee J.M."/>
            <person name="Lenz C.A."/>
            <person name="Li J.H."/>
            <person name="Li Y.-P."/>
            <person name="Lin X."/>
            <person name="Liu S.X."/>
            <person name="Liu Z.A."/>
            <person name="Luros J.S."/>
            <person name="Maiti R."/>
            <person name="Marziali A."/>
            <person name="Militscher J."/>
            <person name="Miranda M."/>
            <person name="Nguyen M."/>
            <person name="Nierman W.C."/>
            <person name="Osborne B.I."/>
            <person name="Pai G."/>
            <person name="Peterson J."/>
            <person name="Pham P.K."/>
            <person name="Rizzo M."/>
            <person name="Rooney T."/>
            <person name="Rowley D."/>
            <person name="Sakano H."/>
            <person name="Salzberg S.L."/>
            <person name="Schwartz J.R."/>
            <person name="Shinn P."/>
            <person name="Southwick A.M."/>
            <person name="Sun H."/>
            <person name="Tallon L.J."/>
            <person name="Tambunga G."/>
            <person name="Toriumi M.J."/>
            <person name="Town C.D."/>
            <person name="Utterback T."/>
            <person name="Van Aken S."/>
            <person name="Vaysberg M."/>
            <person name="Vysotskaia V.S."/>
            <person name="Walker M."/>
            <person name="Wu D."/>
            <person name="Yu G."/>
            <person name="Fraser C.M."/>
            <person name="Venter J.C."/>
            <person name="Davis R.W."/>
        </authorList>
    </citation>
    <scope>NUCLEOTIDE SEQUENCE [LARGE SCALE GENOMIC DNA]</scope>
    <source>
        <strain>cv. Columbia</strain>
    </source>
</reference>
<reference key="2">
    <citation type="journal article" date="2017" name="Plant J.">
        <title>Araport11: a complete reannotation of the Arabidopsis thaliana reference genome.</title>
        <authorList>
            <person name="Cheng C.Y."/>
            <person name="Krishnakumar V."/>
            <person name="Chan A.P."/>
            <person name="Thibaud-Nissen F."/>
            <person name="Schobel S."/>
            <person name="Town C.D."/>
        </authorList>
    </citation>
    <scope>GENOME REANNOTATION</scope>
    <source>
        <strain>cv. Columbia</strain>
    </source>
</reference>
<reference key="3">
    <citation type="submission" date="2006-07" db="EMBL/GenBank/DDBJ databases">
        <title>Large-scale analysis of RIKEN Arabidopsis full-length (RAFL) cDNAs.</title>
        <authorList>
            <person name="Totoki Y."/>
            <person name="Seki M."/>
            <person name="Ishida J."/>
            <person name="Nakajima M."/>
            <person name="Enju A."/>
            <person name="Kamiya A."/>
            <person name="Narusaka M."/>
            <person name="Shin-i T."/>
            <person name="Nakagawa M."/>
            <person name="Sakamoto N."/>
            <person name="Oishi K."/>
            <person name="Kohara Y."/>
            <person name="Kobayashi M."/>
            <person name="Toyoda A."/>
            <person name="Sakaki Y."/>
            <person name="Sakurai T."/>
            <person name="Iida K."/>
            <person name="Akiyama K."/>
            <person name="Satou M."/>
            <person name="Toyoda T."/>
            <person name="Konagaya A."/>
            <person name="Carninci P."/>
            <person name="Kawai J."/>
            <person name="Hayashizaki Y."/>
            <person name="Shinozaki K."/>
        </authorList>
    </citation>
    <scope>NUCLEOTIDE SEQUENCE [LARGE SCALE MRNA] OF 1-1380</scope>
    <source>
        <strain>cv. Columbia</strain>
    </source>
</reference>
<reference key="4">
    <citation type="journal article" date="2008" name="BMC Genomics">
        <title>Genome-wide analysis of CCCH zinc finger family in Arabidopsis and rice.</title>
        <authorList>
            <person name="Wang D."/>
            <person name="Guo Y."/>
            <person name="Wu C."/>
            <person name="Yang G."/>
            <person name="Li Y."/>
            <person name="Zheng C."/>
        </authorList>
    </citation>
    <scope>NOMENCLATURE</scope>
</reference>
<reference key="5">
    <citation type="journal article" date="2009" name="Plant Physiol.">
        <title>Large-scale Arabidopsis phosphoproteome profiling reveals novel chloroplast kinase substrates and phosphorylation networks.</title>
        <authorList>
            <person name="Reiland S."/>
            <person name="Messerli G."/>
            <person name="Baerenfaller K."/>
            <person name="Gerrits B."/>
            <person name="Endler A."/>
            <person name="Grossmann J."/>
            <person name="Gruissem W."/>
            <person name="Baginsky S."/>
        </authorList>
    </citation>
    <scope>PHOSPHORYLATION [LARGE SCALE ANALYSIS] AT SER-378 AND SER-708</scope>
    <scope>IDENTIFICATION BY MASS SPECTROMETRY [LARGE SCALE ANALYSIS]</scope>
</reference>
<proteinExistence type="evidence at protein level"/>
<name>Y1158_ARATH</name>
<accession>P0C945</accession>
<accession>F4HY24</accession>
<accession>Q0WQL3</accession>
<accession>Q9LPK3</accession>
<organism>
    <name type="scientific">Arabidopsis thaliana</name>
    <name type="common">Mouse-ear cress</name>
    <dbReference type="NCBI Taxonomy" id="3702"/>
    <lineage>
        <taxon>Eukaryota</taxon>
        <taxon>Viridiplantae</taxon>
        <taxon>Streptophyta</taxon>
        <taxon>Embryophyta</taxon>
        <taxon>Tracheophyta</taxon>
        <taxon>Spermatophyta</taxon>
        <taxon>Magnoliopsida</taxon>
        <taxon>eudicotyledons</taxon>
        <taxon>Gunneridae</taxon>
        <taxon>Pentapetalae</taxon>
        <taxon>rosids</taxon>
        <taxon>malvids</taxon>
        <taxon>Brassicales</taxon>
        <taxon>Brassicaceae</taxon>
        <taxon>Camelineae</taxon>
        <taxon>Arabidopsis</taxon>
    </lineage>
</organism>
<gene>
    <name type="ordered locus">At1g21580</name>
    <name type="ORF">F24J8.17</name>
</gene>
<protein>
    <recommendedName>
        <fullName>Uncharacterized protein At1g21580</fullName>
    </recommendedName>
</protein>
<comment type="sequence caution" evidence="2">
    <conflict type="erroneous gene model prediction">
        <sequence resource="EMBL-CDS" id="AAF87903"/>
    </conflict>
    <text>The predicted gene has been split into 2 genes: At1g21570 and At1g21580.</text>
</comment>
<comment type="sequence caution" evidence="2">
    <conflict type="erroneous gene model prediction">
        <sequence resource="EMBL-CDS" id="AEE30120"/>
    </conflict>
    <text>The predicted gene has been split into 2 genes: At1g21570 and At1g21580.</text>
</comment>